<evidence type="ECO:0000250" key="1">
    <source>
        <dbReference type="UniProtKB" id="O25806"/>
    </source>
</evidence>
<evidence type="ECO:0000255" key="2">
    <source>
        <dbReference type="HAMAP-Rule" id="MF_01321"/>
    </source>
</evidence>
<evidence type="ECO:0000255" key="3">
    <source>
        <dbReference type="HAMAP-Rule" id="MF_01322"/>
    </source>
</evidence>
<evidence type="ECO:0000305" key="4"/>
<organism>
    <name type="scientific">Wolbachia sp. subsp. Brugia malayi (strain TRS)</name>
    <dbReference type="NCBI Taxonomy" id="292805"/>
    <lineage>
        <taxon>Bacteria</taxon>
        <taxon>Pseudomonadati</taxon>
        <taxon>Pseudomonadota</taxon>
        <taxon>Alphaproteobacteria</taxon>
        <taxon>Rickettsiales</taxon>
        <taxon>Anaplasmataceae</taxon>
        <taxon>Wolbachieae</taxon>
        <taxon>Wolbachia</taxon>
    </lineage>
</organism>
<protein>
    <recommendedName>
        <fullName>Bifunctional DNA-directed RNA polymerase subunit beta-beta'</fullName>
        <ecNumber evidence="2 3">2.7.7.6</ecNumber>
    </recommendedName>
    <domain>
        <recommendedName>
            <fullName evidence="2">DNA-directed RNA polymerase subunit beta</fullName>
        </recommendedName>
        <alternativeName>
            <fullName evidence="2">RNA polymerase subunit beta</fullName>
        </alternativeName>
        <alternativeName>
            <fullName evidence="2">Transcriptase subunit beta</fullName>
        </alternativeName>
    </domain>
    <domain>
        <recommendedName>
            <fullName evidence="3">DNA-directed RNA polymerase subunit beta'</fullName>
        </recommendedName>
        <alternativeName>
            <fullName evidence="3">RNA polymerase beta'</fullName>
        </alternativeName>
        <alternativeName>
            <fullName evidence="3">Transcriptase subunit beta'</fullName>
        </alternativeName>
    </domain>
</protein>
<sequence>MVDSSYMCASNAFIPRISYSRSIDLKDSLLDLVKVQKESYKSFTPGNHGNERLESIFRSVFPINDPLHRATIEFISCRIDNPKYDESECIKRGITFSARVIASIRLVIMQDGISLDEYKSIKGSGDHSKLSTIIKFIGEQEVHFCELPMMTDKGTFIINGVEKVIVSQMHRSPGVFFDSDKGKTYNSGKLIYSARVIPYRGSWLDIEFDVKDLLYFRIDRKRKLPISVLLKALGLSNSDILDRFYEKIKYIKYKNSWKVPFVPDKFKGVRLPFDLMDVEGNVLFKANVRITSRLAKKLHDDELKEYLVPFDSICGLFLAEDLIDSVSSTKILSAGESIKIEDVKKLELLSIGEISVLNIDNLSVGPYILNTLFLDENMSYQDALYEIYKVLRPGEVPVLEIVEEFFHNLFFNPEYYDLSNIGRLKLNSYLGLDYDEDLTVLTHEDIIEIVRKIVLLRDGQGSVDDIDHLGNRRVRSVGEFIENQFRAGLLKLERAVIDSMSTSSLDKVSSPDFINPKVLTNVLRDFFNSSQLSQFMDQTNPLSEITHKRRLSALGPGGLTRDRAGFEVRDVHPTHYGRICPIETPEGQNIGLINSLAIYARVNKYGFIESPYRKVINRVATDQIEYLSAIDEGLYYIADASAKLDNNNRFIDDMLYCRYAGNFVMVSSDQVSYIDVSPKQVISVAASLIPFLENDDANRALMGSNMQRQAVPLLKPTAPLVGTGIESFVASGSGAVVLAKRDGIVDSSDSNSIVIRAFDEERVNYLGVDIYHLKKFQRSNHNTCINQKPLVRIGDYVKEGDVIADGPAINSGELALGQNLLVAFMSWQGYNFEDSIIISSEIVKKDLFTSIHIEEFECVVHDTPLGSEKITRAIPGVNEENLYHLDNSGIVKIGTRVGPGYILVGKITPKPSLLLPPETKLLMTIFGEKSFDCADSSLYTSPDVEGTVIDVQVFTRRGVEENERALLIKQKEMNDLEKERDYIINVASEYFYDELKKLLVHSCSQDQEKLDAIEREQWWGIGLKNRSISEQVKNLKKDFDKKVSNTIAQFKQKVEKLDEGYDLPQGVLMSVKVFIAVKHSLQPGDKMAGRHGNKGVISRVVPVEDMPYLEDGTPVDIILNPLGVPSRMNVGQILETHVGWACKKLGERVGNILDEINKINSDFCKEIRSLDDNNFAKFAAVYFDNKKTEEVRDDEITDSLVNIPNKGLLNDELNALVENYLNSCKSAYDNLRSFLIEVYSCGSDVSICNNIRDISNSNLIEFAHKLRNGIPVAAPVFEGPKDKNIIKLFTLAGLDPSGQTEAYDGRTGEKFDRKVTVGYMYMLKLHHLVDDKIHARSVGPYSLVTQQPLGGKSHFGGQRFGEMECWALQAYGAAYTLQEMLTVKSDDINGRVKIYESIIKGDSNFECGTPESFNVMIKELRSLCLNVALKQNNVVIEDISHTNIAQSFDKIGISIASPENIKSMSYGEVKDVSTANYRTFKVEKGGLFCPKIFGPVNDDECLCGKYKKRRHRGRICEKCGVEVTSSKVRRERMGHIELASPVAHIWFLKSLPSRIGALLDMSLRDIENILYSDNYIVIDPLVSPFEKGEIISEKIYNEAKDDYGIDSFVAMQGVEAIRELLTCLDLHQIRKDLRLELESVASEIRRKKIIKRLRIIENFIKSGNRPEWMILTTIPILPPDLRPLVSLESGRPAVSDLNHHYRTIINRNNRLRKLLSLNPPEIMIRNEKRMLQEAVDSLFDNSRRNALTNKAGAIGYKKSISDMLKGKQGRFRQNLLGKRVDYSGRSVIVVGPALKLNQCGLPKRMALELFKPFVYSKLKLYGMAPTIKFASKLIRAEKPEVWDMLEEVIKEHPVLLNRAPTLHRLGIQAFEPILIEGKAIQLHPLVCTAFNADFDGDQMAVHVPISLEAQLEARVLMMSTNNVLSPSNGRPIIVPSKDIILGIYYLTLQEQTDKEGDDLPFLGTFGEVEHSLSDGTLHIHSSIKYRIEYTNSEGETCYKTIRTTPGRLILWQIFPKHENLNFDLVNQVLTVKEVTSIVDLIYRNCGQSATVEFSDRLMVLGFEYATFSGISFSRCDLVIPETKAEHVDHARGEIKKFSMQYQDGLITRSERYNKVIDEWSKCTDMIANDMLKSISVYDRNSKYNSVYMMVNSGARGSTSQMKQLAGMRGLMTKPSGEIIETPIISNFREGLNVFEYFNSTHGARKGLADTALKTANSGYLTRRLVDVSQNCIVTKHDCKTKNGLVVRATVEGGTIVASLESVVLGRTAANDIYNPVTKELLVKAGELIDEDKVKQINIAGLDAVKIRSPLTCEVSPGVCSLCYGRDLATGKIVSIGEAVGVIAAQSVGEPGTQLTMRTFHIGGVMTRGVESSNIIASINAKIKLSNSNIIIDKNGDKIAISRSCEVVLIDSLGSEKLRHSIPYGAKLCVDEGKSVKIGDKIAEWDPYTLPIITEKTGTVLYQDLKDGVSITEVMDESTGISSKVVKDWKLYSGGANLRPRIVLLDDNGKVMTLASGIEACYFIPIGAVLNVQDGQKVHAGDVITRTPRESVKTRDITGGLPRVIELFEARRPREHAIVSEIDGHVVFSEKDRRGKRSVLIKPLNEQISPIEYLVSRSKHVIVNEGDFVRKGDLLMDGDPDLHDILRVLGLEALAHYMISEIQQVYRLQGVRIDNKHLEVILKQMLQKVEITDPGDTMYLVGESIDKLEVDKGNDVMSNSGKRPACYLPILQGITRASLETKSFISAASFQETTKVLTEAAFCGKEDPLSGLKENVIVGRLIPAGTGLIMSKVRALSLCDNMDKYEKYFDIEAYDEKLLEDNGCHLHSGKKESVAESRYN</sequence>
<reference key="1">
    <citation type="journal article" date="2005" name="PLoS Biol.">
        <title>The Wolbachia genome of Brugia malayi: endosymbiont evolution within a human pathogenic nematode.</title>
        <authorList>
            <person name="Foster J."/>
            <person name="Ganatra M."/>
            <person name="Kamal I."/>
            <person name="Ware J."/>
            <person name="Makarova K."/>
            <person name="Ivanova N."/>
            <person name="Bhattacharyya A."/>
            <person name="Kapatral V."/>
            <person name="Kumar S."/>
            <person name="Posfai J."/>
            <person name="Vincze T."/>
            <person name="Ingram J."/>
            <person name="Moran L."/>
            <person name="Lapidus A."/>
            <person name="Omelchenko M."/>
            <person name="Kyrpides N."/>
            <person name="Ghedin E."/>
            <person name="Wang S."/>
            <person name="Goltsman E."/>
            <person name="Joukov V."/>
            <person name="Ostrovskaya O."/>
            <person name="Tsukerman K."/>
            <person name="Mazur M."/>
            <person name="Comb D."/>
            <person name="Koonin E."/>
            <person name="Slatko B."/>
        </authorList>
    </citation>
    <scope>NUCLEOTIDE SEQUENCE [LARGE SCALE GENOMIC DNA]</scope>
    <source>
        <strain>TRS</strain>
    </source>
</reference>
<feature type="chain" id="PRO_0000225503" description="Bifunctional DNA-directed RNA polymerase subunit beta-beta'">
    <location>
        <begin position="1"/>
        <end position="2839"/>
    </location>
</feature>
<feature type="region of interest" description="DNA-directed RNA polymerase subunit beta">
    <location>
        <begin position="1"/>
        <end position="1433"/>
    </location>
</feature>
<feature type="region of interest" description="DNA-directed RNA polymerase subunit beta'">
    <location>
        <begin position="1436"/>
        <end position="2839"/>
    </location>
</feature>
<feature type="binding site" evidence="3">
    <location>
        <position position="1501"/>
    </location>
    <ligand>
        <name>Zn(2+)</name>
        <dbReference type="ChEBI" id="CHEBI:29105"/>
        <label>1</label>
    </ligand>
</feature>
<feature type="binding site" evidence="3">
    <location>
        <position position="1503"/>
    </location>
    <ligand>
        <name>Zn(2+)</name>
        <dbReference type="ChEBI" id="CHEBI:29105"/>
        <label>1</label>
    </ligand>
</feature>
<feature type="binding site" evidence="3">
    <location>
        <position position="1516"/>
    </location>
    <ligand>
        <name>Zn(2+)</name>
        <dbReference type="ChEBI" id="CHEBI:29105"/>
        <label>1</label>
    </ligand>
</feature>
<feature type="binding site" evidence="3">
    <location>
        <position position="1519"/>
    </location>
    <ligand>
        <name>Zn(2+)</name>
        <dbReference type="ChEBI" id="CHEBI:29105"/>
        <label>1</label>
    </ligand>
</feature>
<feature type="binding site" evidence="3">
    <location>
        <position position="1893"/>
    </location>
    <ligand>
        <name>Mg(2+)</name>
        <dbReference type="ChEBI" id="CHEBI:18420"/>
    </ligand>
</feature>
<feature type="binding site" evidence="3">
    <location>
        <position position="1895"/>
    </location>
    <ligand>
        <name>Mg(2+)</name>
        <dbReference type="ChEBI" id="CHEBI:18420"/>
    </ligand>
</feature>
<feature type="binding site" evidence="3">
    <location>
        <position position="1897"/>
    </location>
    <ligand>
        <name>Mg(2+)</name>
        <dbReference type="ChEBI" id="CHEBI:18420"/>
    </ligand>
</feature>
<feature type="binding site" evidence="3">
    <location>
        <position position="2238"/>
    </location>
    <ligand>
        <name>Zn(2+)</name>
        <dbReference type="ChEBI" id="CHEBI:29105"/>
        <label>2</label>
    </ligand>
</feature>
<feature type="binding site" evidence="3">
    <location>
        <position position="2312"/>
    </location>
    <ligand>
        <name>Zn(2+)</name>
        <dbReference type="ChEBI" id="CHEBI:29105"/>
        <label>2</label>
    </ligand>
</feature>
<feature type="binding site" evidence="3">
    <location>
        <position position="2319"/>
    </location>
    <ligand>
        <name>Zn(2+)</name>
        <dbReference type="ChEBI" id="CHEBI:29105"/>
        <label>2</label>
    </ligand>
</feature>
<feature type="binding site" evidence="3">
    <location>
        <position position="2322"/>
    </location>
    <ligand>
        <name>Zn(2+)</name>
        <dbReference type="ChEBI" id="CHEBI:29105"/>
        <label>2</label>
    </ligand>
</feature>
<dbReference type="EC" id="2.7.7.6" evidence="2 3"/>
<dbReference type="EMBL" id="AE017321">
    <property type="protein sequence ID" value="AAW71235.1"/>
    <property type="molecule type" value="Genomic_DNA"/>
</dbReference>
<dbReference type="RefSeq" id="WP_011256845.1">
    <property type="nucleotide sequence ID" value="NC_006833.1"/>
</dbReference>
<dbReference type="SMR" id="Q5GRY9"/>
<dbReference type="STRING" id="292805.Wbm0647"/>
<dbReference type="KEGG" id="wbm:Wbm0647"/>
<dbReference type="eggNOG" id="COG0085">
    <property type="taxonomic scope" value="Bacteria"/>
</dbReference>
<dbReference type="eggNOG" id="COG0086">
    <property type="taxonomic scope" value="Bacteria"/>
</dbReference>
<dbReference type="HOGENOM" id="CLU_000524_0_1_5"/>
<dbReference type="Proteomes" id="UP000000534">
    <property type="component" value="Chromosome"/>
</dbReference>
<dbReference type="GO" id="GO:0000428">
    <property type="term" value="C:DNA-directed RNA polymerase complex"/>
    <property type="evidence" value="ECO:0007669"/>
    <property type="project" value="UniProtKB-KW"/>
</dbReference>
<dbReference type="GO" id="GO:0003677">
    <property type="term" value="F:DNA binding"/>
    <property type="evidence" value="ECO:0007669"/>
    <property type="project" value="UniProtKB-UniRule"/>
</dbReference>
<dbReference type="GO" id="GO:0003899">
    <property type="term" value="F:DNA-directed RNA polymerase activity"/>
    <property type="evidence" value="ECO:0007669"/>
    <property type="project" value="UniProtKB-UniRule"/>
</dbReference>
<dbReference type="GO" id="GO:0000287">
    <property type="term" value="F:magnesium ion binding"/>
    <property type="evidence" value="ECO:0007669"/>
    <property type="project" value="UniProtKB-UniRule"/>
</dbReference>
<dbReference type="GO" id="GO:0032549">
    <property type="term" value="F:ribonucleoside binding"/>
    <property type="evidence" value="ECO:0007669"/>
    <property type="project" value="InterPro"/>
</dbReference>
<dbReference type="GO" id="GO:0008270">
    <property type="term" value="F:zinc ion binding"/>
    <property type="evidence" value="ECO:0007669"/>
    <property type="project" value="UniProtKB-UniRule"/>
</dbReference>
<dbReference type="GO" id="GO:0006351">
    <property type="term" value="P:DNA-templated transcription"/>
    <property type="evidence" value="ECO:0007669"/>
    <property type="project" value="UniProtKB-UniRule"/>
</dbReference>
<dbReference type="CDD" id="cd00653">
    <property type="entry name" value="RNA_pol_B_RPB2"/>
    <property type="match status" value="1"/>
</dbReference>
<dbReference type="CDD" id="cd02655">
    <property type="entry name" value="RNAP_beta'_C"/>
    <property type="match status" value="1"/>
</dbReference>
<dbReference type="CDD" id="cd01609">
    <property type="entry name" value="RNAP_beta'_N"/>
    <property type="match status" value="1"/>
</dbReference>
<dbReference type="FunFam" id="3.90.1800.10:FF:000001">
    <property type="entry name" value="DNA-directed RNA polymerase subunit beta"/>
    <property type="match status" value="1"/>
</dbReference>
<dbReference type="Gene3D" id="1.10.132.30">
    <property type="match status" value="1"/>
</dbReference>
<dbReference type="Gene3D" id="1.10.150.390">
    <property type="match status" value="1"/>
</dbReference>
<dbReference type="Gene3D" id="1.10.1790.20">
    <property type="match status" value="1"/>
</dbReference>
<dbReference type="Gene3D" id="1.10.40.90">
    <property type="match status" value="1"/>
</dbReference>
<dbReference type="Gene3D" id="2.40.40.20">
    <property type="match status" value="1"/>
</dbReference>
<dbReference type="Gene3D" id="2.40.50.100">
    <property type="match status" value="4"/>
</dbReference>
<dbReference type="Gene3D" id="2.40.50.150">
    <property type="match status" value="1"/>
</dbReference>
<dbReference type="Gene3D" id="3.90.1100.10">
    <property type="match status" value="2"/>
</dbReference>
<dbReference type="Gene3D" id="2.30.150.10">
    <property type="entry name" value="DNA-directed RNA polymerase, beta subunit, external 1 domain"/>
    <property type="match status" value="1"/>
</dbReference>
<dbReference type="Gene3D" id="2.40.270.10">
    <property type="entry name" value="DNA-directed RNA polymerase, subunit 2, domain 6"/>
    <property type="match status" value="1"/>
</dbReference>
<dbReference type="Gene3D" id="3.90.1800.10">
    <property type="entry name" value="RNA polymerase alpha subunit dimerisation domain"/>
    <property type="match status" value="1"/>
</dbReference>
<dbReference type="Gene3D" id="4.10.860.120">
    <property type="entry name" value="RNA polymerase II, clamp domain"/>
    <property type="match status" value="1"/>
</dbReference>
<dbReference type="Gene3D" id="1.10.274.100">
    <property type="entry name" value="RNA polymerase Rpb1, domain 3"/>
    <property type="match status" value="2"/>
</dbReference>
<dbReference type="HAMAP" id="MF_01321">
    <property type="entry name" value="RNApol_bact_RpoB"/>
    <property type="match status" value="1"/>
</dbReference>
<dbReference type="HAMAP" id="MF_01322">
    <property type="entry name" value="RNApol_bact_RpoC"/>
    <property type="match status" value="1"/>
</dbReference>
<dbReference type="InterPro" id="IPR042107">
    <property type="entry name" value="DNA-dir_RNA_pol_bsu_ext_1_sf"/>
</dbReference>
<dbReference type="InterPro" id="IPR019462">
    <property type="entry name" value="DNA-dir_RNA_pol_bsu_external_1"/>
</dbReference>
<dbReference type="InterPro" id="IPR015712">
    <property type="entry name" value="DNA-dir_RNA_pol_su2"/>
</dbReference>
<dbReference type="InterPro" id="IPR007120">
    <property type="entry name" value="DNA-dir_RNAP_su2_dom"/>
</dbReference>
<dbReference type="InterPro" id="IPR037033">
    <property type="entry name" value="DNA-dir_RNAP_su2_hyb_sf"/>
</dbReference>
<dbReference type="InterPro" id="IPR045867">
    <property type="entry name" value="DNA-dir_RpoC_beta_prime"/>
</dbReference>
<dbReference type="InterPro" id="IPR012754">
    <property type="entry name" value="DNA-dir_RpoC_beta_prime_bact"/>
</dbReference>
<dbReference type="InterPro" id="IPR000722">
    <property type="entry name" value="RNA_pol_asu"/>
</dbReference>
<dbReference type="InterPro" id="IPR010243">
    <property type="entry name" value="RNA_pol_bsu_bac"/>
</dbReference>
<dbReference type="InterPro" id="IPR007121">
    <property type="entry name" value="RNA_pol_bsu_CS"/>
</dbReference>
<dbReference type="InterPro" id="IPR007644">
    <property type="entry name" value="RNA_pol_bsu_protrusion"/>
</dbReference>
<dbReference type="InterPro" id="IPR006592">
    <property type="entry name" value="RNA_pol_N"/>
</dbReference>
<dbReference type="InterPro" id="IPR007080">
    <property type="entry name" value="RNA_pol_Rpb1_1"/>
</dbReference>
<dbReference type="InterPro" id="IPR007066">
    <property type="entry name" value="RNA_pol_Rpb1_3"/>
</dbReference>
<dbReference type="InterPro" id="IPR042102">
    <property type="entry name" value="RNA_pol_Rpb1_3_sf"/>
</dbReference>
<dbReference type="InterPro" id="IPR007083">
    <property type="entry name" value="RNA_pol_Rpb1_4"/>
</dbReference>
<dbReference type="InterPro" id="IPR007081">
    <property type="entry name" value="RNA_pol_Rpb1_5"/>
</dbReference>
<dbReference type="InterPro" id="IPR044893">
    <property type="entry name" value="RNA_pol_Rpb1_clamp_domain"/>
</dbReference>
<dbReference type="InterPro" id="IPR007642">
    <property type="entry name" value="RNA_pol_Rpb2_2"/>
</dbReference>
<dbReference type="InterPro" id="IPR007645">
    <property type="entry name" value="RNA_pol_Rpb2_3"/>
</dbReference>
<dbReference type="InterPro" id="IPR007641">
    <property type="entry name" value="RNA_pol_Rpb2_7"/>
</dbReference>
<dbReference type="InterPro" id="IPR014724">
    <property type="entry name" value="RNA_pol_RPB2_OB-fold"/>
</dbReference>
<dbReference type="InterPro" id="IPR038120">
    <property type="entry name" value="Rpb1_funnel_sf"/>
</dbReference>
<dbReference type="NCBIfam" id="NF001616">
    <property type="entry name" value="PRK00405.1"/>
    <property type="match status" value="1"/>
</dbReference>
<dbReference type="NCBIfam" id="NF011417">
    <property type="entry name" value="PRK14844.1"/>
    <property type="match status" value="1"/>
</dbReference>
<dbReference type="NCBIfam" id="TIGR02013">
    <property type="entry name" value="rpoB"/>
    <property type="match status" value="1"/>
</dbReference>
<dbReference type="NCBIfam" id="TIGR02386">
    <property type="entry name" value="rpoC_TIGR"/>
    <property type="match status" value="1"/>
</dbReference>
<dbReference type="PANTHER" id="PTHR19376">
    <property type="entry name" value="DNA-DIRECTED RNA POLYMERASE"/>
    <property type="match status" value="1"/>
</dbReference>
<dbReference type="PANTHER" id="PTHR19376:SF54">
    <property type="entry name" value="DNA-DIRECTED RNA POLYMERASE SUBUNIT BETA"/>
    <property type="match status" value="1"/>
</dbReference>
<dbReference type="Pfam" id="PF04997">
    <property type="entry name" value="RNA_pol_Rpb1_1"/>
    <property type="match status" value="1"/>
</dbReference>
<dbReference type="Pfam" id="PF00623">
    <property type="entry name" value="RNA_pol_Rpb1_2"/>
    <property type="match status" value="2"/>
</dbReference>
<dbReference type="Pfam" id="PF04983">
    <property type="entry name" value="RNA_pol_Rpb1_3"/>
    <property type="match status" value="1"/>
</dbReference>
<dbReference type="Pfam" id="PF05000">
    <property type="entry name" value="RNA_pol_Rpb1_4"/>
    <property type="match status" value="1"/>
</dbReference>
<dbReference type="Pfam" id="PF04998">
    <property type="entry name" value="RNA_pol_Rpb1_5"/>
    <property type="match status" value="1"/>
</dbReference>
<dbReference type="Pfam" id="PF04563">
    <property type="entry name" value="RNA_pol_Rpb2_1"/>
    <property type="match status" value="1"/>
</dbReference>
<dbReference type="Pfam" id="PF04561">
    <property type="entry name" value="RNA_pol_Rpb2_2"/>
    <property type="match status" value="2"/>
</dbReference>
<dbReference type="Pfam" id="PF04565">
    <property type="entry name" value="RNA_pol_Rpb2_3"/>
    <property type="match status" value="1"/>
</dbReference>
<dbReference type="Pfam" id="PF10385">
    <property type="entry name" value="RNA_pol_Rpb2_45"/>
    <property type="match status" value="1"/>
</dbReference>
<dbReference type="Pfam" id="PF00562">
    <property type="entry name" value="RNA_pol_Rpb2_6"/>
    <property type="match status" value="1"/>
</dbReference>
<dbReference type="Pfam" id="PF04560">
    <property type="entry name" value="RNA_pol_Rpb2_7"/>
    <property type="match status" value="1"/>
</dbReference>
<dbReference type="SMART" id="SM00663">
    <property type="entry name" value="RPOLA_N"/>
    <property type="match status" value="1"/>
</dbReference>
<dbReference type="SUPFAM" id="SSF64484">
    <property type="entry name" value="beta and beta-prime subunits of DNA dependent RNA-polymerase"/>
    <property type="match status" value="2"/>
</dbReference>
<dbReference type="PROSITE" id="PS01166">
    <property type="entry name" value="RNA_POL_BETA"/>
    <property type="match status" value="1"/>
</dbReference>
<accession>Q5GRY9</accession>
<name>RPOBC_WOLTR</name>
<keyword id="KW-0240">DNA-directed RNA polymerase</keyword>
<keyword id="KW-0460">Magnesium</keyword>
<keyword id="KW-0479">Metal-binding</keyword>
<keyword id="KW-0548">Nucleotidyltransferase</keyword>
<keyword id="KW-1185">Reference proteome</keyword>
<keyword id="KW-0804">Transcription</keyword>
<keyword id="KW-0808">Transferase</keyword>
<keyword id="KW-0862">Zinc</keyword>
<comment type="function">
    <text evidence="2 3">DNA-dependent RNA polymerase catalyzes the transcription of DNA into RNA using the four ribonucleoside triphosphates as substrates.</text>
</comment>
<comment type="catalytic activity">
    <reaction evidence="2 3">
        <text>RNA(n) + a ribonucleoside 5'-triphosphate = RNA(n+1) + diphosphate</text>
        <dbReference type="Rhea" id="RHEA:21248"/>
        <dbReference type="Rhea" id="RHEA-COMP:14527"/>
        <dbReference type="Rhea" id="RHEA-COMP:17342"/>
        <dbReference type="ChEBI" id="CHEBI:33019"/>
        <dbReference type="ChEBI" id="CHEBI:61557"/>
        <dbReference type="ChEBI" id="CHEBI:140395"/>
        <dbReference type="EC" id="2.7.7.6"/>
    </reaction>
</comment>
<comment type="cofactor">
    <cofactor evidence="3">
        <name>Mg(2+)</name>
        <dbReference type="ChEBI" id="CHEBI:18420"/>
    </cofactor>
    <text evidence="3">Binds 1 Mg(2+) ion per subunit.</text>
</comment>
<comment type="cofactor">
    <cofactor evidence="3">
        <name>Zn(2+)</name>
        <dbReference type="ChEBI" id="CHEBI:29105"/>
    </cofactor>
    <text evidence="3">Binds 2 Zn(2+) ions per subunit.</text>
</comment>
<comment type="subunit">
    <text evidence="2 3">The RNAP catalytic core consists of 2 alpha, 1 beta/beta' and 1 omega subunit. When a sigma factor is associated with the core the holoenzyme is formed, which can initiate transcription.</text>
</comment>
<comment type="miscellaneous">
    <text evidence="1">Fusion of rpoB and rpoC occurs naturally in Helicobacter species and at least some Wolbachia; the protein has been artificially split in two in H.pylori. The split protein seems to function normally.</text>
</comment>
<comment type="similarity">
    <text evidence="4">In the N-terminal section; belongs to the RNA polymerase beta chain family.</text>
</comment>
<comment type="similarity">
    <text evidence="4">In the C-terminal section; belongs to the RNA polymerase beta' chain family.</text>
</comment>
<gene>
    <name type="primary">rpoBC</name>
    <name type="ordered locus">Wbm0647</name>
</gene>
<proteinExistence type="inferred from homology"/>